<name>AROC_ENT38</name>
<sequence>MAGNSIGQLFRVTTFGESHGLALGCIVDGVPPGIELTEADLQHDLDRRRPGTSRYTTQRREPDQVKILSGVFEGRTTGTSIGLLIENTDQRSQDYGAIKDVFRPGHADYTYEQKFGFRDYRGGGRSSARETAMRVAAGAIAKKYLAQKFGIVIRGCLTQMGDIPLAIKDWDLVEQNPFFCADADKIDALDELMRALKKEGDSIGAKVTVIADGVPPGLGEPVFDRLDADIAHAMMSINAVKGVEIGDGFEVVALRGSQNRDEITAQGFQSNHAGGILGGISSGQQIVANIALKPTSSITVPGHTINRAGEEVEMITKGRHDPCVGIRAVPIAEAMLAIVLMDHFLRQRAQNADVIPPLPRW</sequence>
<reference key="1">
    <citation type="journal article" date="2010" name="PLoS Genet.">
        <title>Genome sequence of the plant growth promoting endophytic bacterium Enterobacter sp. 638.</title>
        <authorList>
            <person name="Taghavi S."/>
            <person name="van der Lelie D."/>
            <person name="Hoffman A."/>
            <person name="Zhang Y.B."/>
            <person name="Walla M.D."/>
            <person name="Vangronsveld J."/>
            <person name="Newman L."/>
            <person name="Monchy S."/>
        </authorList>
    </citation>
    <scope>NUCLEOTIDE SEQUENCE [LARGE SCALE GENOMIC DNA]</scope>
    <source>
        <strain>638</strain>
    </source>
</reference>
<accession>A4WCW2</accession>
<keyword id="KW-0028">Amino-acid biosynthesis</keyword>
<keyword id="KW-0057">Aromatic amino acid biosynthesis</keyword>
<keyword id="KW-0274">FAD</keyword>
<keyword id="KW-0285">Flavoprotein</keyword>
<keyword id="KW-0288">FMN</keyword>
<keyword id="KW-0456">Lyase</keyword>
<keyword id="KW-0521">NADP</keyword>
<feature type="chain" id="PRO_1000059312" description="Chorismate synthase">
    <location>
        <begin position="1"/>
        <end position="361"/>
    </location>
</feature>
<feature type="binding site" evidence="1">
    <location>
        <position position="48"/>
    </location>
    <ligand>
        <name>NADP(+)</name>
        <dbReference type="ChEBI" id="CHEBI:58349"/>
    </ligand>
</feature>
<feature type="binding site" evidence="1">
    <location>
        <position position="54"/>
    </location>
    <ligand>
        <name>NADP(+)</name>
        <dbReference type="ChEBI" id="CHEBI:58349"/>
    </ligand>
</feature>
<feature type="binding site" evidence="1">
    <location>
        <begin position="125"/>
        <end position="127"/>
    </location>
    <ligand>
        <name>FMN</name>
        <dbReference type="ChEBI" id="CHEBI:58210"/>
    </ligand>
</feature>
<feature type="binding site" evidence="1">
    <location>
        <begin position="238"/>
        <end position="239"/>
    </location>
    <ligand>
        <name>FMN</name>
        <dbReference type="ChEBI" id="CHEBI:58210"/>
    </ligand>
</feature>
<feature type="binding site" evidence="1">
    <location>
        <position position="278"/>
    </location>
    <ligand>
        <name>FMN</name>
        <dbReference type="ChEBI" id="CHEBI:58210"/>
    </ligand>
</feature>
<feature type="binding site" evidence="1">
    <location>
        <begin position="293"/>
        <end position="297"/>
    </location>
    <ligand>
        <name>FMN</name>
        <dbReference type="ChEBI" id="CHEBI:58210"/>
    </ligand>
</feature>
<feature type="binding site" evidence="1">
    <location>
        <position position="319"/>
    </location>
    <ligand>
        <name>FMN</name>
        <dbReference type="ChEBI" id="CHEBI:58210"/>
    </ligand>
</feature>
<evidence type="ECO:0000255" key="1">
    <source>
        <dbReference type="HAMAP-Rule" id="MF_00300"/>
    </source>
</evidence>
<organism>
    <name type="scientific">Enterobacter sp. (strain 638)</name>
    <dbReference type="NCBI Taxonomy" id="399742"/>
    <lineage>
        <taxon>Bacteria</taxon>
        <taxon>Pseudomonadati</taxon>
        <taxon>Pseudomonadota</taxon>
        <taxon>Gammaproteobacteria</taxon>
        <taxon>Enterobacterales</taxon>
        <taxon>Enterobacteriaceae</taxon>
        <taxon>Enterobacter</taxon>
    </lineage>
</organism>
<dbReference type="EC" id="4.2.3.5" evidence="1"/>
<dbReference type="EMBL" id="CP000653">
    <property type="protein sequence ID" value="ABP61542.1"/>
    <property type="molecule type" value="Genomic_DNA"/>
</dbReference>
<dbReference type="RefSeq" id="WP_015959875.1">
    <property type="nucleotide sequence ID" value="NC_009436.1"/>
</dbReference>
<dbReference type="SMR" id="A4WCW2"/>
<dbReference type="STRING" id="399742.Ent638_2877"/>
<dbReference type="KEGG" id="ent:Ent638_2877"/>
<dbReference type="eggNOG" id="COG0082">
    <property type="taxonomic scope" value="Bacteria"/>
</dbReference>
<dbReference type="HOGENOM" id="CLU_034547_0_2_6"/>
<dbReference type="OrthoDB" id="9771806at2"/>
<dbReference type="UniPathway" id="UPA00053">
    <property type="reaction ID" value="UER00090"/>
</dbReference>
<dbReference type="Proteomes" id="UP000000230">
    <property type="component" value="Chromosome"/>
</dbReference>
<dbReference type="GO" id="GO:0005829">
    <property type="term" value="C:cytosol"/>
    <property type="evidence" value="ECO:0007669"/>
    <property type="project" value="TreeGrafter"/>
</dbReference>
<dbReference type="GO" id="GO:0004107">
    <property type="term" value="F:chorismate synthase activity"/>
    <property type="evidence" value="ECO:0007669"/>
    <property type="project" value="UniProtKB-UniRule"/>
</dbReference>
<dbReference type="GO" id="GO:0010181">
    <property type="term" value="F:FMN binding"/>
    <property type="evidence" value="ECO:0007669"/>
    <property type="project" value="TreeGrafter"/>
</dbReference>
<dbReference type="GO" id="GO:0008652">
    <property type="term" value="P:amino acid biosynthetic process"/>
    <property type="evidence" value="ECO:0007669"/>
    <property type="project" value="UniProtKB-KW"/>
</dbReference>
<dbReference type="GO" id="GO:0009073">
    <property type="term" value="P:aromatic amino acid family biosynthetic process"/>
    <property type="evidence" value="ECO:0007669"/>
    <property type="project" value="UniProtKB-KW"/>
</dbReference>
<dbReference type="GO" id="GO:0009423">
    <property type="term" value="P:chorismate biosynthetic process"/>
    <property type="evidence" value="ECO:0007669"/>
    <property type="project" value="UniProtKB-UniRule"/>
</dbReference>
<dbReference type="CDD" id="cd07304">
    <property type="entry name" value="Chorismate_synthase"/>
    <property type="match status" value="1"/>
</dbReference>
<dbReference type="FunFam" id="3.60.150.10:FF:000001">
    <property type="entry name" value="Chorismate synthase"/>
    <property type="match status" value="1"/>
</dbReference>
<dbReference type="Gene3D" id="3.60.150.10">
    <property type="entry name" value="Chorismate synthase AroC"/>
    <property type="match status" value="1"/>
</dbReference>
<dbReference type="HAMAP" id="MF_00300">
    <property type="entry name" value="Chorismate_synth"/>
    <property type="match status" value="1"/>
</dbReference>
<dbReference type="InterPro" id="IPR000453">
    <property type="entry name" value="Chorismate_synth"/>
</dbReference>
<dbReference type="InterPro" id="IPR035904">
    <property type="entry name" value="Chorismate_synth_AroC_sf"/>
</dbReference>
<dbReference type="InterPro" id="IPR020541">
    <property type="entry name" value="Chorismate_synthase_CS"/>
</dbReference>
<dbReference type="NCBIfam" id="TIGR00033">
    <property type="entry name" value="aroC"/>
    <property type="match status" value="1"/>
</dbReference>
<dbReference type="NCBIfam" id="NF003793">
    <property type="entry name" value="PRK05382.1"/>
    <property type="match status" value="1"/>
</dbReference>
<dbReference type="PANTHER" id="PTHR21085">
    <property type="entry name" value="CHORISMATE SYNTHASE"/>
    <property type="match status" value="1"/>
</dbReference>
<dbReference type="PANTHER" id="PTHR21085:SF0">
    <property type="entry name" value="CHORISMATE SYNTHASE"/>
    <property type="match status" value="1"/>
</dbReference>
<dbReference type="Pfam" id="PF01264">
    <property type="entry name" value="Chorismate_synt"/>
    <property type="match status" value="1"/>
</dbReference>
<dbReference type="PIRSF" id="PIRSF001456">
    <property type="entry name" value="Chorismate_synth"/>
    <property type="match status" value="1"/>
</dbReference>
<dbReference type="SUPFAM" id="SSF103263">
    <property type="entry name" value="Chorismate synthase, AroC"/>
    <property type="match status" value="1"/>
</dbReference>
<dbReference type="PROSITE" id="PS00787">
    <property type="entry name" value="CHORISMATE_SYNTHASE_1"/>
    <property type="match status" value="1"/>
</dbReference>
<dbReference type="PROSITE" id="PS00788">
    <property type="entry name" value="CHORISMATE_SYNTHASE_2"/>
    <property type="match status" value="1"/>
</dbReference>
<dbReference type="PROSITE" id="PS00789">
    <property type="entry name" value="CHORISMATE_SYNTHASE_3"/>
    <property type="match status" value="1"/>
</dbReference>
<comment type="function">
    <text evidence="1">Catalyzes the anti-1,4-elimination of the C-3 phosphate and the C-6 proR hydrogen from 5-enolpyruvylshikimate-3-phosphate (EPSP) to yield chorismate, which is the branch point compound that serves as the starting substrate for the three terminal pathways of aromatic amino acid biosynthesis. This reaction introduces a second double bond into the aromatic ring system.</text>
</comment>
<comment type="catalytic activity">
    <reaction evidence="1">
        <text>5-O-(1-carboxyvinyl)-3-phosphoshikimate = chorismate + phosphate</text>
        <dbReference type="Rhea" id="RHEA:21020"/>
        <dbReference type="ChEBI" id="CHEBI:29748"/>
        <dbReference type="ChEBI" id="CHEBI:43474"/>
        <dbReference type="ChEBI" id="CHEBI:57701"/>
        <dbReference type="EC" id="4.2.3.5"/>
    </reaction>
</comment>
<comment type="cofactor">
    <cofactor evidence="1">
        <name>FMNH2</name>
        <dbReference type="ChEBI" id="CHEBI:57618"/>
    </cofactor>
    <text evidence="1">Reduced FMN (FMNH(2)).</text>
</comment>
<comment type="pathway">
    <text evidence="1">Metabolic intermediate biosynthesis; chorismate biosynthesis; chorismate from D-erythrose 4-phosphate and phosphoenolpyruvate: step 7/7.</text>
</comment>
<comment type="subunit">
    <text evidence="1">Homotetramer.</text>
</comment>
<comment type="similarity">
    <text evidence="1">Belongs to the chorismate synthase family.</text>
</comment>
<proteinExistence type="inferred from homology"/>
<gene>
    <name evidence="1" type="primary">aroC</name>
    <name type="ordered locus">Ent638_2877</name>
</gene>
<protein>
    <recommendedName>
        <fullName evidence="1">Chorismate synthase</fullName>
        <shortName evidence="1">CS</shortName>
        <ecNumber evidence="1">4.2.3.5</ecNumber>
    </recommendedName>
    <alternativeName>
        <fullName evidence="1">5-enolpyruvylshikimate-3-phosphate phospholyase</fullName>
    </alternativeName>
</protein>